<protein>
    <recommendedName>
        <fullName>Rho-N domain-containing protein 1, chloroplastic</fullName>
    </recommendedName>
</protein>
<feature type="transit peptide" description="Chloroplast" evidence="1">
    <location>
        <begin position="1"/>
        <end position="63"/>
    </location>
</feature>
<feature type="chain" id="PRO_0000421382" description="Rho-N domain-containing protein 1, chloroplastic">
    <location>
        <begin position="64"/>
        <end position="401"/>
    </location>
</feature>
<feature type="region of interest" description="Disordered" evidence="2">
    <location>
        <begin position="73"/>
        <end position="129"/>
    </location>
</feature>
<feature type="region of interest" description="Disordered" evidence="2">
    <location>
        <begin position="180"/>
        <end position="361"/>
    </location>
</feature>
<feature type="coiled-coil region" evidence="1">
    <location>
        <begin position="339"/>
        <end position="371"/>
    </location>
</feature>
<feature type="compositionally biased region" description="Polar residues" evidence="2">
    <location>
        <begin position="102"/>
        <end position="126"/>
    </location>
</feature>
<feature type="compositionally biased region" description="Polar residues" evidence="2">
    <location>
        <begin position="210"/>
        <end position="223"/>
    </location>
</feature>
<feature type="compositionally biased region" description="Polar residues" evidence="2">
    <location>
        <begin position="240"/>
        <end position="265"/>
    </location>
</feature>
<feature type="compositionally biased region" description="Basic and acidic residues" evidence="2">
    <location>
        <begin position="266"/>
        <end position="290"/>
    </location>
</feature>
<feature type="compositionally biased region" description="Acidic residues" evidence="2">
    <location>
        <begin position="339"/>
        <end position="358"/>
    </location>
</feature>
<feature type="splice variant" id="VSP_045660" description="In isoform 2." evidence="4">
    <original>EPEHEPAYEHEHEP</original>
    <variation>DLSMMLMKIVMKLRKKP</variation>
    <location>
        <begin position="276"/>
        <end position="289"/>
    </location>
</feature>
<feature type="splice variant" id="VSP_045661" description="In isoform 2." evidence="4">
    <location>
        <begin position="290"/>
        <end position="401"/>
    </location>
</feature>
<feature type="sequence conflict" description="In Ref. 4; AAM61210." evidence="4" ref="4">
    <original>R</original>
    <variation>I</variation>
    <location>
        <position position="129"/>
    </location>
</feature>
<feature type="sequence conflict" description="In Ref. 4; AAM61210." evidence="4" ref="4">
    <original>S</original>
    <variation>L</variation>
    <location>
        <position position="244"/>
    </location>
</feature>
<feature type="sequence conflict" description="In Ref. 4; AAM61210." evidence="4" ref="4">
    <original>E</original>
    <variation>D</variation>
    <location>
        <position position="284"/>
    </location>
</feature>
<feature type="sequence conflict" description="In Ref. 4; AAM61210." evidence="4" ref="4">
    <original>E</original>
    <variation>K</variation>
    <location>
        <position position="311"/>
    </location>
</feature>
<feature type="sequence conflict" description="In Ref. 4; AAM61210." evidence="4" ref="4">
    <original>G</original>
    <variation>S</variation>
    <location>
        <position position="374"/>
    </location>
</feature>
<proteinExistence type="evidence at protein level"/>
<gene>
    <name type="primary">RHON1</name>
    <name type="ordered locus">At1g06190</name>
    <name type="ORF">F9P14.5</name>
</gene>
<keyword id="KW-0025">Alternative splicing</keyword>
<keyword id="KW-0150">Chloroplast</keyword>
<keyword id="KW-0175">Coiled coil</keyword>
<keyword id="KW-0934">Plastid</keyword>
<keyword id="KW-1185">Reference proteome</keyword>
<keyword id="KW-0694">RNA-binding</keyword>
<keyword id="KW-0809">Transit peptide</keyword>
<sequence length="401" mass="44530">MAMSGTFHLTSDYVPGYTLSDSRCFFNSAVSRRTLAILPCSSCLDHKNGRLKSVPNRSSFVCRASSGGYRRNPDFSRLNKHGYRGNNRQSGGREDFDIENSDMLSSRNGPLFNLSSSPKFQATSSPGPREKEIVELFRKVQAQLRARAAAKKEEKKIEEASKGQGKESETVDSLLKLLRKHSGEQSKRQVSKFSSQGEVQGDTVDKQDRTGNLVTSGNKDNNASSFTRPTSSFRRKSPVPRSQSPPAYSSEATFDQSSSYSVTWTQKKDTVELHDEPEHEPAYEHEHEPENESEPGPVTTMLEPDSELKPESSSFYQEEEDDDVTFDVLSQDDGILDVLSDDDESLDDADEDSDEAEEEAVKDLSELKLVELRGIAKSRGLKGLSKMKKAELVELLGSDSS</sequence>
<organism>
    <name type="scientific">Arabidopsis thaliana</name>
    <name type="common">Mouse-ear cress</name>
    <dbReference type="NCBI Taxonomy" id="3702"/>
    <lineage>
        <taxon>Eukaryota</taxon>
        <taxon>Viridiplantae</taxon>
        <taxon>Streptophyta</taxon>
        <taxon>Embryophyta</taxon>
        <taxon>Tracheophyta</taxon>
        <taxon>Spermatophyta</taxon>
        <taxon>Magnoliopsida</taxon>
        <taxon>eudicotyledons</taxon>
        <taxon>Gunneridae</taxon>
        <taxon>Pentapetalae</taxon>
        <taxon>rosids</taxon>
        <taxon>malvids</taxon>
        <taxon>Brassicales</taxon>
        <taxon>Brassicaceae</taxon>
        <taxon>Camelineae</taxon>
        <taxon>Arabidopsis</taxon>
    </lineage>
</organism>
<dbReference type="EMBL" id="AC025290">
    <property type="protein sequence ID" value="AAF80216.1"/>
    <property type="status" value="ALT_INIT"/>
    <property type="molecule type" value="Genomic_DNA"/>
</dbReference>
<dbReference type="EMBL" id="CP002684">
    <property type="protein sequence ID" value="AEE27956.1"/>
    <property type="molecule type" value="Genomic_DNA"/>
</dbReference>
<dbReference type="EMBL" id="CP002684">
    <property type="protein sequence ID" value="AEE27957.1"/>
    <property type="molecule type" value="Genomic_DNA"/>
</dbReference>
<dbReference type="EMBL" id="AF370238">
    <property type="protein sequence ID" value="AAK44053.1"/>
    <property type="molecule type" value="mRNA"/>
</dbReference>
<dbReference type="EMBL" id="AY062959">
    <property type="protein sequence ID" value="AAL33805.1"/>
    <property type="molecule type" value="mRNA"/>
</dbReference>
<dbReference type="EMBL" id="AY084647">
    <property type="protein sequence ID" value="AAM61210.1"/>
    <property type="molecule type" value="mRNA"/>
</dbReference>
<dbReference type="PIR" id="E86197">
    <property type="entry name" value="E86197"/>
</dbReference>
<dbReference type="RefSeq" id="NP_001077466.1">
    <molecule id="Q94K75-2"/>
    <property type="nucleotide sequence ID" value="NM_001083997.1"/>
</dbReference>
<dbReference type="RefSeq" id="NP_563761.1">
    <molecule id="Q94K75-1"/>
    <property type="nucleotide sequence ID" value="NM_100500.4"/>
</dbReference>
<dbReference type="SMR" id="Q94K75"/>
<dbReference type="BioGRID" id="22370">
    <property type="interactions" value="1"/>
</dbReference>
<dbReference type="FunCoup" id="Q94K75">
    <property type="interactions" value="1428"/>
</dbReference>
<dbReference type="STRING" id="3702.Q94K75"/>
<dbReference type="iPTMnet" id="Q94K75"/>
<dbReference type="PaxDb" id="3702-AT1G06190.1"/>
<dbReference type="ProteomicsDB" id="236250">
    <molecule id="Q94K75-1"/>
</dbReference>
<dbReference type="EnsemblPlants" id="AT1G06190.1">
    <molecule id="Q94K75-1"/>
    <property type="protein sequence ID" value="AT1G06190.1"/>
    <property type="gene ID" value="AT1G06190"/>
</dbReference>
<dbReference type="EnsemblPlants" id="AT1G06190.2">
    <molecule id="Q94K75-2"/>
    <property type="protein sequence ID" value="AT1G06190.2"/>
    <property type="gene ID" value="AT1G06190"/>
</dbReference>
<dbReference type="GeneID" id="837128"/>
<dbReference type="Gramene" id="AT1G06190.1">
    <molecule id="Q94K75-1"/>
    <property type="protein sequence ID" value="AT1G06190.1"/>
    <property type="gene ID" value="AT1G06190"/>
</dbReference>
<dbReference type="Gramene" id="AT1G06190.2">
    <molecule id="Q94K75-2"/>
    <property type="protein sequence ID" value="AT1G06190.2"/>
    <property type="gene ID" value="AT1G06190"/>
</dbReference>
<dbReference type="KEGG" id="ath:AT1G06190"/>
<dbReference type="Araport" id="AT1G06190"/>
<dbReference type="TAIR" id="AT1G06190">
    <property type="gene designation" value="RHON1"/>
</dbReference>
<dbReference type="eggNOG" id="ENOG502T2MX">
    <property type="taxonomic scope" value="Eukaryota"/>
</dbReference>
<dbReference type="HOGENOM" id="CLU_062947_0_0_1"/>
<dbReference type="InParanoid" id="Q94K75"/>
<dbReference type="OMA" id="CFYNPAV"/>
<dbReference type="PhylomeDB" id="Q94K75"/>
<dbReference type="PRO" id="PR:Q94K75"/>
<dbReference type="Proteomes" id="UP000006548">
    <property type="component" value="Chromosome 1"/>
</dbReference>
<dbReference type="ExpressionAtlas" id="Q94K75">
    <property type="expression patterns" value="baseline and differential"/>
</dbReference>
<dbReference type="GO" id="GO:0009507">
    <property type="term" value="C:chloroplast"/>
    <property type="evidence" value="ECO:0000314"/>
    <property type="project" value="TAIR"/>
</dbReference>
<dbReference type="GO" id="GO:0005576">
    <property type="term" value="C:extracellular region"/>
    <property type="evidence" value="ECO:0007005"/>
    <property type="project" value="TAIR"/>
</dbReference>
<dbReference type="GO" id="GO:0003729">
    <property type="term" value="F:mRNA binding"/>
    <property type="evidence" value="ECO:0000314"/>
    <property type="project" value="TAIR"/>
</dbReference>
<dbReference type="GO" id="GO:0019843">
    <property type="term" value="F:rRNA binding"/>
    <property type="evidence" value="ECO:0000314"/>
    <property type="project" value="TAIR"/>
</dbReference>
<dbReference type="GO" id="GO:0010239">
    <property type="term" value="P:chloroplast mRNA processing"/>
    <property type="evidence" value="ECO:0000315"/>
    <property type="project" value="TAIR"/>
</dbReference>
<dbReference type="GO" id="GO:1901259">
    <property type="term" value="P:chloroplast rRNA processing"/>
    <property type="evidence" value="ECO:0000315"/>
    <property type="project" value="TAIR"/>
</dbReference>
<dbReference type="GO" id="GO:0006353">
    <property type="term" value="P:DNA-templated transcription termination"/>
    <property type="evidence" value="ECO:0007669"/>
    <property type="project" value="InterPro"/>
</dbReference>
<dbReference type="InterPro" id="IPR011112">
    <property type="entry name" value="Rho-like_N"/>
</dbReference>
<dbReference type="PANTHER" id="PTHR34449">
    <property type="entry name" value="RHO TERMINATION FACTOR"/>
    <property type="match status" value="1"/>
</dbReference>
<dbReference type="PANTHER" id="PTHR34449:SF7">
    <property type="entry name" value="RHO-N DOMAIN-CONTAINING PROTEIN 1, CHLOROPLASTIC"/>
    <property type="match status" value="1"/>
</dbReference>
<dbReference type="Pfam" id="PF07498">
    <property type="entry name" value="Rho_N"/>
    <property type="match status" value="1"/>
</dbReference>
<dbReference type="SMART" id="SM00959">
    <property type="entry name" value="Rho_N"/>
    <property type="match status" value="1"/>
</dbReference>
<evidence type="ECO:0000255" key="1"/>
<evidence type="ECO:0000256" key="2">
    <source>
        <dbReference type="SAM" id="MobiDB-lite"/>
    </source>
</evidence>
<evidence type="ECO:0000269" key="3">
    <source>
    </source>
</evidence>
<evidence type="ECO:0000305" key="4"/>
<comment type="function">
    <text evidence="3">Binds to and supports processing of specific plastid RNAs. Associates via its C-terminal Rho-N domain to single stranded regions of 16S and 23S rRNAs or to rbcL mRNAs. May be involved in targeting transcripts to RNases such as RNE or RNase J.</text>
</comment>
<comment type="subunit">
    <text evidence="3">Homodimer or homomultimer. Part of a chloroplastic degradosome-like complex. Interacts with RNE.</text>
</comment>
<comment type="subcellular location">
    <subcellularLocation>
        <location evidence="3">Plastid</location>
        <location evidence="3">Chloroplast</location>
    </subcellularLocation>
</comment>
<comment type="alternative products">
    <event type="alternative splicing"/>
    <isoform>
        <id>Q94K75-1</id>
        <name>1</name>
        <sequence type="displayed"/>
    </isoform>
    <isoform>
        <id>Q94K75-2</id>
        <name>2</name>
        <sequence type="described" ref="VSP_045660 VSP_045661"/>
    </isoform>
</comment>
<comment type="disruption phenotype">
    <text evidence="3">Smaller and albinotic phenotype. Increased number and decreased size of chloroplasts. Seedling lethal when homozygous.</text>
</comment>
<comment type="sequence caution" evidence="4">
    <conflict type="erroneous initiation">
        <sequence resource="EMBL-CDS" id="AAF80216"/>
    </conflict>
    <text>Truncated N-terminus.</text>
</comment>
<name>RHON1_ARATH</name>
<accession>Q94K75</accession>
<accession>A8MQM6</accession>
<accession>Q8LFT8</accession>
<accession>Q9LNC8</accession>
<reference key="1">
    <citation type="journal article" date="2000" name="Nature">
        <title>Sequence and analysis of chromosome 1 of the plant Arabidopsis thaliana.</title>
        <authorList>
            <person name="Theologis A."/>
            <person name="Ecker J.R."/>
            <person name="Palm C.J."/>
            <person name="Federspiel N.A."/>
            <person name="Kaul S."/>
            <person name="White O."/>
            <person name="Alonso J."/>
            <person name="Altafi H."/>
            <person name="Araujo R."/>
            <person name="Bowman C.L."/>
            <person name="Brooks S.Y."/>
            <person name="Buehler E."/>
            <person name="Chan A."/>
            <person name="Chao Q."/>
            <person name="Chen H."/>
            <person name="Cheuk R.F."/>
            <person name="Chin C.W."/>
            <person name="Chung M.K."/>
            <person name="Conn L."/>
            <person name="Conway A.B."/>
            <person name="Conway A.R."/>
            <person name="Creasy T.H."/>
            <person name="Dewar K."/>
            <person name="Dunn P."/>
            <person name="Etgu P."/>
            <person name="Feldblyum T.V."/>
            <person name="Feng J.-D."/>
            <person name="Fong B."/>
            <person name="Fujii C.Y."/>
            <person name="Gill J.E."/>
            <person name="Goldsmith A.D."/>
            <person name="Haas B."/>
            <person name="Hansen N.F."/>
            <person name="Hughes B."/>
            <person name="Huizar L."/>
            <person name="Hunter J.L."/>
            <person name="Jenkins J."/>
            <person name="Johnson-Hopson C."/>
            <person name="Khan S."/>
            <person name="Khaykin E."/>
            <person name="Kim C.J."/>
            <person name="Koo H.L."/>
            <person name="Kremenetskaia I."/>
            <person name="Kurtz D.B."/>
            <person name="Kwan A."/>
            <person name="Lam B."/>
            <person name="Langin-Hooper S."/>
            <person name="Lee A."/>
            <person name="Lee J.M."/>
            <person name="Lenz C.A."/>
            <person name="Li J.H."/>
            <person name="Li Y.-P."/>
            <person name="Lin X."/>
            <person name="Liu S.X."/>
            <person name="Liu Z.A."/>
            <person name="Luros J.S."/>
            <person name="Maiti R."/>
            <person name="Marziali A."/>
            <person name="Militscher J."/>
            <person name="Miranda M."/>
            <person name="Nguyen M."/>
            <person name="Nierman W.C."/>
            <person name="Osborne B.I."/>
            <person name="Pai G."/>
            <person name="Peterson J."/>
            <person name="Pham P.K."/>
            <person name="Rizzo M."/>
            <person name="Rooney T."/>
            <person name="Rowley D."/>
            <person name="Sakano H."/>
            <person name="Salzberg S.L."/>
            <person name="Schwartz J.R."/>
            <person name="Shinn P."/>
            <person name="Southwick A.M."/>
            <person name="Sun H."/>
            <person name="Tallon L.J."/>
            <person name="Tambunga G."/>
            <person name="Toriumi M.J."/>
            <person name="Town C.D."/>
            <person name="Utterback T."/>
            <person name="Van Aken S."/>
            <person name="Vaysberg M."/>
            <person name="Vysotskaia V.S."/>
            <person name="Walker M."/>
            <person name="Wu D."/>
            <person name="Yu G."/>
            <person name="Fraser C.M."/>
            <person name="Venter J.C."/>
            <person name="Davis R.W."/>
        </authorList>
    </citation>
    <scope>NUCLEOTIDE SEQUENCE [LARGE SCALE GENOMIC DNA]</scope>
    <source>
        <strain>cv. Columbia</strain>
    </source>
</reference>
<reference key="2">
    <citation type="journal article" date="2017" name="Plant J.">
        <title>Araport11: a complete reannotation of the Arabidopsis thaliana reference genome.</title>
        <authorList>
            <person name="Cheng C.Y."/>
            <person name="Krishnakumar V."/>
            <person name="Chan A.P."/>
            <person name="Thibaud-Nissen F."/>
            <person name="Schobel S."/>
            <person name="Town C.D."/>
        </authorList>
    </citation>
    <scope>GENOME REANNOTATION</scope>
    <source>
        <strain>cv. Columbia</strain>
    </source>
</reference>
<reference key="3">
    <citation type="journal article" date="2003" name="Science">
        <title>Empirical analysis of transcriptional activity in the Arabidopsis genome.</title>
        <authorList>
            <person name="Yamada K."/>
            <person name="Lim J."/>
            <person name="Dale J.M."/>
            <person name="Chen H."/>
            <person name="Shinn P."/>
            <person name="Palm C.J."/>
            <person name="Southwick A.M."/>
            <person name="Wu H.C."/>
            <person name="Kim C.J."/>
            <person name="Nguyen M."/>
            <person name="Pham P.K."/>
            <person name="Cheuk R.F."/>
            <person name="Karlin-Newmann G."/>
            <person name="Liu S.X."/>
            <person name="Lam B."/>
            <person name="Sakano H."/>
            <person name="Wu T."/>
            <person name="Yu G."/>
            <person name="Miranda M."/>
            <person name="Quach H.L."/>
            <person name="Tripp M."/>
            <person name="Chang C.H."/>
            <person name="Lee J.M."/>
            <person name="Toriumi M.J."/>
            <person name="Chan M.M."/>
            <person name="Tang C.C."/>
            <person name="Onodera C.S."/>
            <person name="Deng J.M."/>
            <person name="Akiyama K."/>
            <person name="Ansari Y."/>
            <person name="Arakawa T."/>
            <person name="Banh J."/>
            <person name="Banno F."/>
            <person name="Bowser L."/>
            <person name="Brooks S.Y."/>
            <person name="Carninci P."/>
            <person name="Chao Q."/>
            <person name="Choy N."/>
            <person name="Enju A."/>
            <person name="Goldsmith A.D."/>
            <person name="Gurjal M."/>
            <person name="Hansen N.F."/>
            <person name="Hayashizaki Y."/>
            <person name="Johnson-Hopson C."/>
            <person name="Hsuan V.W."/>
            <person name="Iida K."/>
            <person name="Karnes M."/>
            <person name="Khan S."/>
            <person name="Koesema E."/>
            <person name="Ishida J."/>
            <person name="Jiang P.X."/>
            <person name="Jones T."/>
            <person name="Kawai J."/>
            <person name="Kamiya A."/>
            <person name="Meyers C."/>
            <person name="Nakajima M."/>
            <person name="Narusaka M."/>
            <person name="Seki M."/>
            <person name="Sakurai T."/>
            <person name="Satou M."/>
            <person name="Tamse R."/>
            <person name="Vaysberg M."/>
            <person name="Wallender E.K."/>
            <person name="Wong C."/>
            <person name="Yamamura Y."/>
            <person name="Yuan S."/>
            <person name="Shinozaki K."/>
            <person name="Davis R.W."/>
            <person name="Theologis A."/>
            <person name="Ecker J.R."/>
        </authorList>
    </citation>
    <scope>NUCLEOTIDE SEQUENCE [LARGE SCALE MRNA] (ISOFORM 1)</scope>
    <source>
        <strain>cv. Columbia</strain>
    </source>
</reference>
<reference key="4">
    <citation type="submission" date="2002-03" db="EMBL/GenBank/DDBJ databases">
        <title>Full-length cDNA from Arabidopsis thaliana.</title>
        <authorList>
            <person name="Brover V.V."/>
            <person name="Troukhan M.E."/>
            <person name="Alexandrov N.A."/>
            <person name="Lu Y.-P."/>
            <person name="Flavell R.B."/>
            <person name="Feldmann K.A."/>
        </authorList>
    </citation>
    <scope>NUCLEOTIDE SEQUENCE [LARGE SCALE MRNA] (ISOFORM 1)</scope>
</reference>
<reference key="5">
    <citation type="journal article" date="2009" name="Plant Physiol.">
        <title>Large-scale Arabidopsis phosphoproteome profiling reveals novel chloroplast kinase substrates and phosphorylation networks.</title>
        <authorList>
            <person name="Reiland S."/>
            <person name="Messerli G."/>
            <person name="Baerenfaller K."/>
            <person name="Gerrits B."/>
            <person name="Endler A."/>
            <person name="Grossmann J."/>
            <person name="Gruissem W."/>
            <person name="Baginsky S."/>
        </authorList>
    </citation>
    <scope>IDENTIFICATION BY MASS SPECTROMETRY [LARGE SCALE ANALYSIS]</scope>
</reference>
<reference key="6">
    <citation type="journal article" date="2012" name="Nucleic Acids Res.">
        <title>RHON1 is a novel ribonucleic acid-binding protein that supports RNase E function in the Arabidopsis chloroplast.</title>
        <authorList>
            <person name="Stoppel R."/>
            <person name="Manavski N."/>
            <person name="Schein A."/>
            <person name="Schuster G."/>
            <person name="Teubner M."/>
            <person name="Schmitz-Linneweber C."/>
            <person name="Meurer J."/>
        </authorList>
    </citation>
    <scope>FUNCTION</scope>
    <scope>IDENTIFICATION BY MASS SPECTROMETRY</scope>
    <scope>INTERACTION WITH RNE</scope>
    <scope>SUBCELLULAR LOCATION</scope>
    <scope>DISRUPTION PHENOTYPE</scope>
</reference>